<organism>
    <name type="scientific">Rattus norvegicus</name>
    <name type="common">Rat</name>
    <dbReference type="NCBI Taxonomy" id="10116"/>
    <lineage>
        <taxon>Eukaryota</taxon>
        <taxon>Metazoa</taxon>
        <taxon>Chordata</taxon>
        <taxon>Craniata</taxon>
        <taxon>Vertebrata</taxon>
        <taxon>Euteleostomi</taxon>
        <taxon>Mammalia</taxon>
        <taxon>Eutheria</taxon>
        <taxon>Euarchontoglires</taxon>
        <taxon>Glires</taxon>
        <taxon>Rodentia</taxon>
        <taxon>Myomorpha</taxon>
        <taxon>Muroidea</taxon>
        <taxon>Muridae</taxon>
        <taxon>Murinae</taxon>
        <taxon>Rattus</taxon>
    </lineage>
</organism>
<feature type="signal peptide" evidence="13">
    <location>
        <begin position="1"/>
        <end position="19"/>
    </location>
</feature>
<feature type="chain" id="PRO_0000017508" description="Aggrecan core protein">
    <location>
        <begin position="20"/>
        <end position="2124"/>
    </location>
</feature>
<feature type="domain" description="Ig-like V-type">
    <location>
        <begin position="34"/>
        <end position="147"/>
    </location>
</feature>
<feature type="domain" description="Link 1" evidence="10">
    <location>
        <begin position="153"/>
        <end position="248"/>
    </location>
</feature>
<feature type="domain" description="Link 2" evidence="10">
    <location>
        <begin position="254"/>
        <end position="350"/>
    </location>
</feature>
<feature type="domain" description="Link 3" evidence="10">
    <location>
        <begin position="487"/>
        <end position="582"/>
    </location>
</feature>
<feature type="domain" description="Link 4" evidence="10">
    <location>
        <begin position="588"/>
        <end position="684"/>
    </location>
</feature>
<feature type="domain" description="C-type lectin" evidence="7">
    <location>
        <begin position="1910"/>
        <end position="2036"/>
    </location>
</feature>
<feature type="domain" description="Sushi" evidence="9">
    <location>
        <begin position="2039"/>
        <end position="2099"/>
    </location>
</feature>
<feature type="region of interest" description="G1-A">
    <location>
        <begin position="48"/>
        <end position="140"/>
    </location>
</feature>
<feature type="region of interest" description="G1-B">
    <location>
        <begin position="152"/>
        <end position="247"/>
    </location>
</feature>
<feature type="region of interest" description="G1-B'">
    <location>
        <begin position="253"/>
        <end position="349"/>
    </location>
</feature>
<feature type="region of interest" description="Disordered" evidence="11">
    <location>
        <begin position="434"/>
        <end position="454"/>
    </location>
</feature>
<feature type="region of interest" description="G2-B">
    <location>
        <begin position="486"/>
        <end position="580"/>
    </location>
</feature>
<feature type="region of interest" description="G2-B'">
    <location>
        <begin position="587"/>
        <end position="682"/>
    </location>
</feature>
<feature type="region of interest" description="KS">
    <location>
        <begin position="685"/>
        <end position="798"/>
    </location>
</feature>
<feature type="region of interest" description="Disordered" evidence="11">
    <location>
        <begin position="731"/>
        <end position="1042"/>
    </location>
</feature>
<feature type="region of interest" description="CS-1">
    <location>
        <begin position="801"/>
        <end position="1226"/>
    </location>
</feature>
<feature type="region of interest" description="Disordered" evidence="11">
    <location>
        <begin position="1100"/>
        <end position="1212"/>
    </location>
</feature>
<feature type="region of interest" description="Disordered" evidence="11">
    <location>
        <begin position="1225"/>
        <end position="1253"/>
    </location>
</feature>
<feature type="region of interest" description="CS-2">
    <location>
        <begin position="1227"/>
        <end position="1909"/>
    </location>
</feature>
<feature type="region of interest" description="Disordered" evidence="11">
    <location>
        <begin position="1295"/>
        <end position="1455"/>
    </location>
</feature>
<feature type="region of interest" description="Disordered" evidence="11">
    <location>
        <begin position="1579"/>
        <end position="1661"/>
    </location>
</feature>
<feature type="region of interest" description="Disordered" evidence="11">
    <location>
        <begin position="1723"/>
        <end position="1913"/>
    </location>
</feature>
<feature type="region of interest" description="G3">
    <location>
        <begin position="1910"/>
        <end position="2124"/>
    </location>
</feature>
<feature type="compositionally biased region" description="Low complexity" evidence="11">
    <location>
        <begin position="771"/>
        <end position="782"/>
    </location>
</feature>
<feature type="compositionally biased region" description="Polar residues" evidence="11">
    <location>
        <begin position="819"/>
        <end position="829"/>
    </location>
</feature>
<feature type="compositionally biased region" description="Low complexity" evidence="11">
    <location>
        <begin position="841"/>
        <end position="855"/>
    </location>
</feature>
<feature type="compositionally biased region" description="Low complexity" evidence="11">
    <location>
        <begin position="887"/>
        <end position="902"/>
    </location>
</feature>
<feature type="compositionally biased region" description="Low complexity" evidence="11">
    <location>
        <begin position="962"/>
        <end position="983"/>
    </location>
</feature>
<feature type="compositionally biased region" description="Low complexity" evidence="11">
    <location>
        <begin position="1301"/>
        <end position="1314"/>
    </location>
</feature>
<feature type="compositionally biased region" description="Polar residues" evidence="11">
    <location>
        <begin position="1327"/>
        <end position="1343"/>
    </location>
</feature>
<feature type="compositionally biased region" description="Polar residues" evidence="11">
    <location>
        <begin position="1377"/>
        <end position="1393"/>
    </location>
</feature>
<feature type="compositionally biased region" description="Polar residues" evidence="11">
    <location>
        <begin position="1406"/>
        <end position="1429"/>
    </location>
</feature>
<feature type="compositionally biased region" description="Low complexity" evidence="11">
    <location>
        <begin position="1446"/>
        <end position="1455"/>
    </location>
</feature>
<feature type="compositionally biased region" description="Polar residues" evidence="11">
    <location>
        <begin position="1611"/>
        <end position="1628"/>
    </location>
</feature>
<feature type="compositionally biased region" description="Polar residues" evidence="11">
    <location>
        <begin position="1637"/>
        <end position="1658"/>
    </location>
</feature>
<feature type="compositionally biased region" description="Polar residues" evidence="11">
    <location>
        <begin position="1774"/>
        <end position="1788"/>
    </location>
</feature>
<feature type="compositionally biased region" description="Basic and acidic residues" evidence="11">
    <location>
        <begin position="1826"/>
        <end position="1839"/>
    </location>
</feature>
<feature type="compositionally biased region" description="Low complexity" evidence="11">
    <location>
        <begin position="1840"/>
        <end position="1852"/>
    </location>
</feature>
<feature type="compositionally biased region" description="Polar residues" evidence="11">
    <location>
        <begin position="1854"/>
        <end position="1895"/>
    </location>
</feature>
<feature type="binding site" evidence="12 16">
    <location>
        <position position="1975"/>
    </location>
    <ligand>
        <name>Ca(2+)</name>
        <dbReference type="ChEBI" id="CHEBI:29108"/>
        <label>1</label>
    </ligand>
</feature>
<feature type="binding site" evidence="12 16">
    <location>
        <position position="1979"/>
    </location>
    <ligand>
        <name>Ca(2+)</name>
        <dbReference type="ChEBI" id="CHEBI:29108"/>
        <label>1</label>
    </ligand>
</feature>
<feature type="binding site" evidence="12 16">
    <location>
        <position position="1999"/>
    </location>
    <ligand>
        <name>Ca(2+)</name>
        <dbReference type="ChEBI" id="CHEBI:29108"/>
        <label>2</label>
    </ligand>
</feature>
<feature type="binding site" evidence="12 16">
    <location>
        <position position="2001"/>
    </location>
    <ligand>
        <name>Ca(2+)</name>
        <dbReference type="ChEBI" id="CHEBI:29108"/>
        <label>2</label>
    </ligand>
</feature>
<feature type="binding site" evidence="12 16">
    <location>
        <position position="2002"/>
    </location>
    <ligand>
        <name>Ca(2+)</name>
        <dbReference type="ChEBI" id="CHEBI:29108"/>
        <label>1</label>
    </ligand>
</feature>
<feature type="binding site" evidence="12 16">
    <location>
        <position position="2008"/>
    </location>
    <ligand>
        <name>Ca(2+)</name>
        <dbReference type="ChEBI" id="CHEBI:29108"/>
        <label>1</label>
    </ligand>
</feature>
<feature type="binding site" evidence="12 16">
    <location>
        <position position="2008"/>
    </location>
    <ligand>
        <name>Ca(2+)</name>
        <dbReference type="ChEBI" id="CHEBI:29108"/>
        <label>2</label>
    </ligand>
</feature>
<feature type="binding site" evidence="12 16">
    <location>
        <position position="2009"/>
    </location>
    <ligand>
        <name>Ca(2+)</name>
        <dbReference type="ChEBI" id="CHEBI:29108"/>
        <label>1</label>
    </ligand>
</feature>
<feature type="binding site" evidence="12 16">
    <location>
        <position position="2022"/>
    </location>
    <ligand>
        <name>Ca(2+)</name>
        <dbReference type="ChEBI" id="CHEBI:29108"/>
        <label>2</label>
    </ligand>
</feature>
<feature type="binding site" evidence="12 16">
    <location>
        <position position="2023"/>
    </location>
    <ligand>
        <name>Ca(2+)</name>
        <dbReference type="ChEBI" id="CHEBI:29108"/>
        <label>2</label>
    </ligand>
</feature>
<feature type="glycosylation site" description="N-linked (GlcNAc...) asparagine" evidence="13">
    <location>
        <position position="126"/>
    </location>
</feature>
<feature type="glycosylation site" description="N-linked (GlcNAc...) asparagine" evidence="6">
    <location>
        <position position="239"/>
    </location>
</feature>
<feature type="glycosylation site" description="N-linked (GlcNAc...) asparagine" evidence="13">
    <location>
        <position position="333"/>
    </location>
</feature>
<feature type="glycosylation site" description="O-linked (Xyl...) (keratan sulfate) threonine" evidence="1">
    <location>
        <position position="371"/>
    </location>
</feature>
<feature type="glycosylation site" description="O-linked (Xyl...) (keratan sulfate) threonine" evidence="1">
    <location>
        <position position="376"/>
    </location>
</feature>
<feature type="glycosylation site" description="N-linked (GlcNAc...) asparagine" evidence="6">
    <location>
        <position position="387"/>
    </location>
</feature>
<feature type="glycosylation site" description="N-linked (GlcNAc...) asparagine" evidence="6">
    <location>
        <position position="611"/>
    </location>
</feature>
<feature type="glycosylation site" description="N-linked (GlcNAc...) asparagine" evidence="6">
    <location>
        <position position="667"/>
    </location>
</feature>
<feature type="glycosylation site" description="O-linked (Xyl...) (chondroitin sulfate) serine" evidence="4">
    <location>
        <position position="1181"/>
    </location>
</feature>
<feature type="glycosylation site" description="O-linked (Xyl...) (chondroitin sulfate) serine" evidence="6">
    <location>
        <position position="1195"/>
    </location>
</feature>
<feature type="glycosylation site" description="O-linked (Xyl...) (chondroitin sulfate) serine" evidence="6">
    <location>
        <position position="1205"/>
    </location>
</feature>
<feature type="glycosylation site" description="O-linked (Xyl...) (chondroitin sulfate) serine" evidence="4">
    <location>
        <position position="1215"/>
    </location>
</feature>
<feature type="glycosylation site" description="O-linked (Xyl...) (chondroitin sulfate) serine" evidence="4">
    <location>
        <position position="1317"/>
    </location>
</feature>
<feature type="glycosylation site" description="N-linked (GlcNAc...) asparagine" evidence="6">
    <location>
        <position position="1842"/>
    </location>
</feature>
<feature type="glycosylation site" description="N-linked (GlcNAc...) asparagine" evidence="6">
    <location>
        <position position="1872"/>
    </location>
</feature>
<feature type="disulfide bond" evidence="8">
    <location>
        <begin position="51"/>
        <end position="133"/>
    </location>
</feature>
<feature type="disulfide bond" evidence="10">
    <location>
        <begin position="175"/>
        <end position="246"/>
    </location>
</feature>
<feature type="disulfide bond" evidence="10">
    <location>
        <begin position="199"/>
        <end position="220"/>
    </location>
</feature>
<feature type="disulfide bond" evidence="10">
    <location>
        <begin position="273"/>
        <end position="348"/>
    </location>
</feature>
<feature type="disulfide bond" evidence="10">
    <location>
        <begin position="297"/>
        <end position="318"/>
    </location>
</feature>
<feature type="disulfide bond" evidence="10">
    <location>
        <begin position="509"/>
        <end position="580"/>
    </location>
</feature>
<feature type="disulfide bond" evidence="10">
    <location>
        <begin position="533"/>
        <end position="554"/>
    </location>
</feature>
<feature type="disulfide bond" evidence="10">
    <location>
        <begin position="607"/>
        <end position="682"/>
    </location>
</feature>
<feature type="disulfide bond" evidence="10">
    <location>
        <begin position="631"/>
        <end position="652"/>
    </location>
</feature>
<feature type="disulfide bond" evidence="12 16">
    <location>
        <begin position="1942"/>
        <end position="2034"/>
    </location>
</feature>
<feature type="disulfide bond" evidence="12 16">
    <location>
        <begin position="2010"/>
        <end position="2026"/>
    </location>
</feature>
<feature type="disulfide bond" evidence="9">
    <location>
        <begin position="2041"/>
        <end position="2084"/>
    </location>
</feature>
<feature type="disulfide bond" evidence="9">
    <location>
        <begin position="2070"/>
        <end position="2097"/>
    </location>
</feature>
<feature type="splice variant" id="VSP_039196" description="In isoform 2." evidence="14">
    <original>A</original>
    <variation>ADIDECLSSPCLNGATCVDALDTFTCLCLPSYRGDLCEI</variation>
    <location>
        <position position="1909"/>
    </location>
</feature>
<feature type="sequence conflict" description="In Ref. 4; AA sequence." evidence="15" ref="4">
    <original>P</original>
    <variation>W</variation>
    <location>
        <position position="38"/>
    </location>
</feature>
<feature type="sequence conflict" description="In Ref. 4; AA sequence." evidence="15" ref="4">
    <original>T</original>
    <variation>E</variation>
    <location>
        <position position="61"/>
    </location>
</feature>
<feature type="sequence conflict" description="In Ref. 4; AA sequence." evidence="15" ref="4">
    <original>I</original>
    <variation>L</variation>
    <location>
        <position position="149"/>
    </location>
</feature>
<feature type="sequence conflict" description="In Ref. 4; AA sequence." evidence="15" ref="4">
    <original>N</original>
    <variation>S</variation>
    <location>
        <position position="239"/>
    </location>
</feature>
<feature type="sequence conflict" description="In Ref. 4; AA sequence." evidence="15" ref="4">
    <original>T</original>
    <variation>A</variation>
    <location>
        <position position="241"/>
    </location>
</feature>
<feature type="sequence conflict" description="In Ref. 1; AAA21000." evidence="15" ref="1">
    <original>TV</original>
    <variation>RL</variation>
    <location>
        <begin position="275"/>
        <end position="276"/>
    </location>
</feature>
<feature type="sequence conflict" description="In Ref. 4; AA sequence." evidence="15" ref="4">
    <original>T</original>
    <variation>H</variation>
    <location>
        <position position="374"/>
    </location>
</feature>
<feature type="sequence conflict" description="In Ref. 4; AA sequence." evidence="15" ref="4">
    <original>W</original>
    <variation>E</variation>
    <location>
        <position position="377"/>
    </location>
</feature>
<feature type="sequence conflict" description="In Ref. 4; AA sequence." evidence="15" ref="4">
    <original>L</original>
    <variation>V</variation>
    <location>
        <position position="380"/>
    </location>
</feature>
<feature type="strand" evidence="17">
    <location>
        <begin position="1919"/>
        <end position="1921"/>
    </location>
</feature>
<feature type="strand" evidence="17">
    <location>
        <begin position="1924"/>
        <end position="1933"/>
    </location>
</feature>
<feature type="helix" evidence="17">
    <location>
        <begin position="1935"/>
        <end position="1944"/>
    </location>
</feature>
<feature type="helix" evidence="17">
    <location>
        <begin position="1955"/>
        <end position="1965"/>
    </location>
</feature>
<feature type="strand" evidence="17">
    <location>
        <begin position="1969"/>
        <end position="1974"/>
    </location>
</feature>
<feature type="strand" evidence="17">
    <location>
        <begin position="1976"/>
        <end position="1978"/>
    </location>
</feature>
<feature type="turn" evidence="17">
    <location>
        <begin position="2005"/>
        <end position="2007"/>
    </location>
</feature>
<feature type="strand" evidence="17">
    <location>
        <begin position="2008"/>
        <end position="2013"/>
    </location>
</feature>
<feature type="turn" evidence="17">
    <location>
        <begin position="2015"/>
        <end position="2019"/>
    </location>
</feature>
<feature type="strand" evidence="17">
    <location>
        <begin position="2021"/>
        <end position="2025"/>
    </location>
</feature>
<feature type="strand" evidence="17">
    <location>
        <begin position="2030"/>
        <end position="2036"/>
    </location>
</feature>
<reference key="1">
    <citation type="journal article" date="1987" name="J. Biol. Chem.">
        <title>Complete primary structure of the rat cartilage proteoglycan core protein deduced from cDNA clones.</title>
        <authorList>
            <person name="Doege K."/>
            <person name="Sasaki M."/>
            <person name="Horigan E."/>
            <person name="Hassell J.R."/>
            <person name="Yamada Y."/>
        </authorList>
    </citation>
    <scope>NUCLEOTIDE SEQUENCE [MRNA] (ISOFORM 2)</scope>
</reference>
<reference key="2">
    <citation type="journal article" date="1988" name="J. Biol. Chem.">
        <authorList>
            <person name="Doege K."/>
            <person name="Sasaki M."/>
            <person name="Horigan E."/>
            <person name="Hassell J.R."/>
            <person name="Yamada Y."/>
        </authorList>
    </citation>
    <scope>ERRATUM OF PUBMED:3693370</scope>
    <scope>SEQUENCE REVISION TO 698</scope>
</reference>
<reference key="3">
    <citation type="journal article" date="1986" name="J. Biol. Chem.">
        <title>Partial cDNA sequence encoding a globular domain at the C-terminus of the rat cartilage proteoglycan.</title>
        <authorList>
            <person name="Doege K."/>
            <person name="Fernandez P."/>
            <person name="Hassell J.R."/>
            <person name="Sasaki M."/>
            <person name="Yamada Y."/>
        </authorList>
    </citation>
    <scope>NUCLEOTIDE SEQUENCE [MRNA] OF 1856-2124 (ISOFORM 1)</scope>
</reference>
<reference key="4">
    <citation type="journal article" date="1987" name="J. Biol. Chem.">
        <title>Cartilage proteoglycan aggregates. The link protein and proteoglycan amino-terminal globular domains have similar structures.</title>
        <authorList>
            <person name="Neame P.J."/>
            <person name="Christner J.E."/>
            <person name="Baker J.R."/>
        </authorList>
    </citation>
    <scope>PROTEIN SEQUENCE OF 20-83 AND 88-386</scope>
    <scope>GLYCOSYLATION AT ASN-126 AND ASN-333</scope>
</reference>
<reference evidence="16" key="5">
    <citation type="journal article" date="2004" name="Structure">
        <title>Structural basis for interactions between tenascins and lectican C-type lectin domains: evidence for a crosslinking role for tenascins.</title>
        <authorList>
            <person name="Lundell A."/>
            <person name="Olin A.I."/>
            <person name="Morgelin M."/>
            <person name="al-Karadaghi S."/>
            <person name="Aspberg A."/>
            <person name="Logan D.T."/>
        </authorList>
    </citation>
    <scope>X-RAY CRYSTALLOGRAPHY (2.6 ANGSTROMS) OF 1909-2037 IN COMPLEX WITH TNR</scope>
    <scope>DISULFIDE BOND</scope>
    <scope>CALCIUM-BINDING SITES</scope>
</reference>
<comment type="function">
    <text>This proteoglycan is a major component of extracellular matrix of cartilagenous tissues. A major function of this protein is to resist compression in cartilage. It binds avidly to hyaluronic acid via an N-terminal globular region. May play a regulatory role in the matrix assembly of the cartilage.</text>
</comment>
<comment type="subunit">
    <text evidence="3 4 5">Forms a complex (via covalent bonds) with MATN1; the interaction increases with age of the organism via an increase in occupancy of MATN1 binding sites (By similarity). Interacts with FBLN1 (By similarity). Interacts with COMP (By similarity).</text>
</comment>
<comment type="subcellular location">
    <subcellularLocation>
        <location evidence="2">Secreted</location>
        <location evidence="2">Extracellular space</location>
        <location evidence="2">Extracellular matrix</location>
    </subcellularLocation>
</comment>
<comment type="alternative products">
    <event type="alternative splicing"/>
    <isoform>
        <id>P07897-1</id>
        <name>1</name>
        <sequence type="displayed"/>
    </isoform>
    <isoform>
        <id>P07897-2</id>
        <name>2</name>
        <sequence type="described" ref="VSP_039196"/>
    </isoform>
</comment>
<comment type="domain">
    <text>Two globular domains, G1 and G2, comprise the N-terminus of the proteoglycan, while another globular region, G3, makes up the C-terminus. G1 contains Link domains and thus consists of three disulfide-bonded loop structures designated as the A, B, B' motifs. G2 is similar to G1. The keratan sulfate (KS) and the chondroitin sulfate (CS) attachment domains lie between G2 and G3.</text>
</comment>
<comment type="PTM">
    <text evidence="13">Contains mostly chondroitin sulfate, but also keratan sulfate chains, N-linked and O-linked oligosaccharides.</text>
</comment>
<comment type="similarity">
    <text evidence="15">Belongs to the aggrecan/versican proteoglycan family.</text>
</comment>
<evidence type="ECO:0000250" key="1"/>
<evidence type="ECO:0000250" key="2">
    <source>
        <dbReference type="UniProtKB" id="P07898"/>
    </source>
</evidence>
<evidence type="ECO:0000250" key="3">
    <source>
        <dbReference type="UniProtKB" id="P13608"/>
    </source>
</evidence>
<evidence type="ECO:0000250" key="4">
    <source>
        <dbReference type="UniProtKB" id="P16112"/>
    </source>
</evidence>
<evidence type="ECO:0000250" key="5">
    <source>
        <dbReference type="UniProtKB" id="Q61282"/>
    </source>
</evidence>
<evidence type="ECO:0000255" key="6"/>
<evidence type="ECO:0000255" key="7">
    <source>
        <dbReference type="PROSITE-ProRule" id="PRU00040"/>
    </source>
</evidence>
<evidence type="ECO:0000255" key="8">
    <source>
        <dbReference type="PROSITE-ProRule" id="PRU00114"/>
    </source>
</evidence>
<evidence type="ECO:0000255" key="9">
    <source>
        <dbReference type="PROSITE-ProRule" id="PRU00302"/>
    </source>
</evidence>
<evidence type="ECO:0000255" key="10">
    <source>
        <dbReference type="PROSITE-ProRule" id="PRU00323"/>
    </source>
</evidence>
<evidence type="ECO:0000256" key="11">
    <source>
        <dbReference type="SAM" id="MobiDB-lite"/>
    </source>
</evidence>
<evidence type="ECO:0000269" key="12">
    <source>
    </source>
</evidence>
<evidence type="ECO:0000269" key="13">
    <source>
    </source>
</evidence>
<evidence type="ECO:0000303" key="14">
    <source>
    </source>
</evidence>
<evidence type="ECO:0000305" key="15"/>
<evidence type="ECO:0007744" key="16">
    <source>
        <dbReference type="PDB" id="1TDQ"/>
    </source>
</evidence>
<evidence type="ECO:0007829" key="17">
    <source>
        <dbReference type="PDB" id="1TDQ"/>
    </source>
</evidence>
<gene>
    <name type="primary">Acan</name>
    <name type="synonym">Agc</name>
    <name type="synonym">Agc1</name>
</gene>
<name>PGCA_RAT</name>
<dbReference type="EMBL" id="J03485">
    <property type="protein sequence ID" value="AAA21000.1"/>
    <property type="molecule type" value="mRNA"/>
</dbReference>
<dbReference type="EMBL" id="M13518">
    <property type="protein sequence ID" value="AAA41836.1"/>
    <property type="molecule type" value="mRNA"/>
</dbReference>
<dbReference type="PIR" id="A92623">
    <property type="entry name" value="A28452"/>
</dbReference>
<dbReference type="RefSeq" id="NP_071526.1">
    <property type="nucleotide sequence ID" value="NM_022190.1"/>
</dbReference>
<dbReference type="PDB" id="1TDQ">
    <property type="method" value="X-ray"/>
    <property type="resolution" value="2.60 A"/>
    <property type="chains" value="B=1909-2037"/>
</dbReference>
<dbReference type="PDBsum" id="1TDQ"/>
<dbReference type="SMR" id="P07897"/>
<dbReference type="BioGRID" id="248701">
    <property type="interactions" value="1"/>
</dbReference>
<dbReference type="FunCoup" id="P07897">
    <property type="interactions" value="383"/>
</dbReference>
<dbReference type="IntAct" id="P07897">
    <property type="interactions" value="2"/>
</dbReference>
<dbReference type="MINT" id="P07897"/>
<dbReference type="STRING" id="10116.ENSRNOP00000042691"/>
<dbReference type="GlyCosmos" id="P07897">
    <property type="glycosylation" value="9 sites, No reported glycans"/>
</dbReference>
<dbReference type="GlyGen" id="P07897">
    <property type="glycosylation" value="16 sites"/>
</dbReference>
<dbReference type="iPTMnet" id="P07897"/>
<dbReference type="PhosphoSitePlus" id="P07897"/>
<dbReference type="PaxDb" id="10116-ENSRNOP00000042691"/>
<dbReference type="GeneID" id="58968"/>
<dbReference type="KEGG" id="rno:58968"/>
<dbReference type="UCSC" id="RGD:68358">
    <molecule id="P07897-1"/>
    <property type="organism name" value="rat"/>
</dbReference>
<dbReference type="AGR" id="RGD:68358"/>
<dbReference type="CTD" id="176"/>
<dbReference type="RGD" id="68358">
    <property type="gene designation" value="Acan"/>
</dbReference>
<dbReference type="eggNOG" id="ENOG502QUX8">
    <property type="taxonomic scope" value="Eukaryota"/>
</dbReference>
<dbReference type="InParanoid" id="P07897"/>
<dbReference type="Reactome" id="R-RNO-1474228">
    <property type="pathway name" value="Degradation of the extracellular matrix"/>
</dbReference>
<dbReference type="Reactome" id="R-RNO-2022854">
    <property type="pathway name" value="Keratan sulfate biosynthesis"/>
</dbReference>
<dbReference type="Reactome" id="R-RNO-2022857">
    <property type="pathway name" value="Keratan sulfate degradation"/>
</dbReference>
<dbReference type="Reactome" id="R-RNO-3000178">
    <property type="pathway name" value="ECM proteoglycans"/>
</dbReference>
<dbReference type="EvolutionaryTrace" id="P07897"/>
<dbReference type="PRO" id="PR:P07897"/>
<dbReference type="Proteomes" id="UP000002494">
    <property type="component" value="Unplaced"/>
</dbReference>
<dbReference type="GO" id="GO:0005604">
    <property type="term" value="C:basement membrane"/>
    <property type="evidence" value="ECO:0000266"/>
    <property type="project" value="RGD"/>
</dbReference>
<dbReference type="GO" id="GO:0031012">
    <property type="term" value="C:extracellular matrix"/>
    <property type="evidence" value="ECO:0000266"/>
    <property type="project" value="RGD"/>
</dbReference>
<dbReference type="GO" id="GO:0005615">
    <property type="term" value="C:extracellular space"/>
    <property type="evidence" value="ECO:0000314"/>
    <property type="project" value="RGD"/>
</dbReference>
<dbReference type="GO" id="GO:0098982">
    <property type="term" value="C:GABA-ergic synapse"/>
    <property type="evidence" value="ECO:0000266"/>
    <property type="project" value="RGD"/>
</dbReference>
<dbReference type="GO" id="GO:0098978">
    <property type="term" value="C:glutamatergic synapse"/>
    <property type="evidence" value="ECO:0000266"/>
    <property type="project" value="RGD"/>
</dbReference>
<dbReference type="GO" id="GO:0043025">
    <property type="term" value="C:neuronal cell body"/>
    <property type="evidence" value="ECO:0000314"/>
    <property type="project" value="RGD"/>
</dbReference>
<dbReference type="GO" id="GO:0072534">
    <property type="term" value="C:perineuronal net"/>
    <property type="evidence" value="ECO:0000314"/>
    <property type="project" value="RGD"/>
</dbReference>
<dbReference type="GO" id="GO:0098966">
    <property type="term" value="C:perisynaptic extracellular matrix"/>
    <property type="evidence" value="ECO:0000266"/>
    <property type="project" value="RGD"/>
</dbReference>
<dbReference type="GO" id="GO:0045202">
    <property type="term" value="C:synapse"/>
    <property type="evidence" value="ECO:0000318"/>
    <property type="project" value="GO_Central"/>
</dbReference>
<dbReference type="GO" id="GO:0005509">
    <property type="term" value="F:calcium ion binding"/>
    <property type="evidence" value="ECO:0000314"/>
    <property type="project" value="RGD"/>
</dbReference>
<dbReference type="GO" id="GO:0030246">
    <property type="term" value="F:carbohydrate binding"/>
    <property type="evidence" value="ECO:0007669"/>
    <property type="project" value="UniProtKB-KW"/>
</dbReference>
<dbReference type="GO" id="GO:0005540">
    <property type="term" value="F:hyaluronic acid binding"/>
    <property type="evidence" value="ECO:0007669"/>
    <property type="project" value="InterPro"/>
</dbReference>
<dbReference type="GO" id="GO:0001502">
    <property type="term" value="P:cartilage condensation"/>
    <property type="evidence" value="ECO:0000266"/>
    <property type="project" value="RGD"/>
</dbReference>
<dbReference type="GO" id="GO:0007155">
    <property type="term" value="P:cell adhesion"/>
    <property type="evidence" value="ECO:0007669"/>
    <property type="project" value="InterPro"/>
</dbReference>
<dbReference type="GO" id="GO:0071363">
    <property type="term" value="P:cellular response to growth factor stimulus"/>
    <property type="evidence" value="ECO:0000270"/>
    <property type="project" value="RGD"/>
</dbReference>
<dbReference type="GO" id="GO:0007417">
    <property type="term" value="P:central nervous system development"/>
    <property type="evidence" value="ECO:0000318"/>
    <property type="project" value="GO_Central"/>
</dbReference>
<dbReference type="GO" id="GO:0060591">
    <property type="term" value="P:chondroblast differentiation"/>
    <property type="evidence" value="ECO:0000270"/>
    <property type="project" value="RGD"/>
</dbReference>
<dbReference type="GO" id="GO:0002063">
    <property type="term" value="P:chondrocyte development"/>
    <property type="evidence" value="ECO:0000266"/>
    <property type="project" value="RGD"/>
</dbReference>
<dbReference type="GO" id="GO:0030199">
    <property type="term" value="P:collagen fibril organization"/>
    <property type="evidence" value="ECO:0000266"/>
    <property type="project" value="RGD"/>
</dbReference>
<dbReference type="GO" id="GO:0007507">
    <property type="term" value="P:heart development"/>
    <property type="evidence" value="ECO:0000266"/>
    <property type="project" value="RGD"/>
</dbReference>
<dbReference type="GO" id="GO:0030336">
    <property type="term" value="P:negative regulation of cell migration"/>
    <property type="evidence" value="ECO:0000314"/>
    <property type="project" value="RGD"/>
</dbReference>
<dbReference type="GO" id="GO:0001503">
    <property type="term" value="P:ossification"/>
    <property type="evidence" value="ECO:0000270"/>
    <property type="project" value="RGD"/>
</dbReference>
<dbReference type="GO" id="GO:0030166">
    <property type="term" value="P:proteoglycan biosynthetic process"/>
    <property type="evidence" value="ECO:0000266"/>
    <property type="project" value="RGD"/>
</dbReference>
<dbReference type="GO" id="GO:0010447">
    <property type="term" value="P:response to acidic pH"/>
    <property type="evidence" value="ECO:0000270"/>
    <property type="project" value="RGD"/>
</dbReference>
<dbReference type="GO" id="GO:0009749">
    <property type="term" value="P:response to glucose"/>
    <property type="evidence" value="ECO:0000270"/>
    <property type="project" value="RGD"/>
</dbReference>
<dbReference type="GO" id="GO:0009629">
    <property type="term" value="P:response to gravity"/>
    <property type="evidence" value="ECO:0000270"/>
    <property type="project" value="RGD"/>
</dbReference>
<dbReference type="GO" id="GO:0009612">
    <property type="term" value="P:response to mechanical stimulus"/>
    <property type="evidence" value="ECO:0000270"/>
    <property type="project" value="RGD"/>
</dbReference>
<dbReference type="GO" id="GO:0009410">
    <property type="term" value="P:response to xenobiotic stimulus"/>
    <property type="evidence" value="ECO:0000270"/>
    <property type="project" value="RGD"/>
</dbReference>
<dbReference type="GO" id="GO:0001501">
    <property type="term" value="P:skeletal system development"/>
    <property type="evidence" value="ECO:0000318"/>
    <property type="project" value="GO_Central"/>
</dbReference>
<dbReference type="GO" id="GO:0021510">
    <property type="term" value="P:spinal cord development"/>
    <property type="evidence" value="ECO:0000270"/>
    <property type="project" value="RGD"/>
</dbReference>
<dbReference type="CDD" id="cd00033">
    <property type="entry name" value="CCP"/>
    <property type="match status" value="1"/>
</dbReference>
<dbReference type="CDD" id="cd03588">
    <property type="entry name" value="CLECT_CSPGs"/>
    <property type="match status" value="1"/>
</dbReference>
<dbReference type="CDD" id="cd05900">
    <property type="entry name" value="Ig_Aggrecan"/>
    <property type="match status" value="1"/>
</dbReference>
<dbReference type="CDD" id="cd03517">
    <property type="entry name" value="Link_domain_CSPGs_modules_1_3"/>
    <property type="match status" value="2"/>
</dbReference>
<dbReference type="CDD" id="cd03520">
    <property type="entry name" value="Link_domain_CSPGs_modules_2_4"/>
    <property type="match status" value="2"/>
</dbReference>
<dbReference type="FunFam" id="3.10.100.10:FF:000009">
    <property type="entry name" value="Aggrecan core protein"/>
    <property type="match status" value="1"/>
</dbReference>
<dbReference type="FunFam" id="3.10.100.10:FF:000011">
    <property type="entry name" value="Aggrecan core protein"/>
    <property type="match status" value="1"/>
</dbReference>
<dbReference type="FunFam" id="2.60.40.10:FF:000451">
    <property type="entry name" value="aggrecan core protein"/>
    <property type="match status" value="1"/>
</dbReference>
<dbReference type="FunFam" id="3.10.100.10:FF:000002">
    <property type="entry name" value="Hyaluronan proteoglycan link protein 1"/>
    <property type="match status" value="2"/>
</dbReference>
<dbReference type="FunFam" id="2.10.70.10:FF:000003">
    <property type="entry name" value="Versican core protein"/>
    <property type="match status" value="1"/>
</dbReference>
<dbReference type="FunFam" id="3.10.100.10:FF:000003">
    <property type="entry name" value="Versican core protein"/>
    <property type="match status" value="1"/>
</dbReference>
<dbReference type="Gene3D" id="2.10.70.10">
    <property type="entry name" value="Complement Module, domain 1"/>
    <property type="match status" value="1"/>
</dbReference>
<dbReference type="Gene3D" id="2.60.40.10">
    <property type="entry name" value="Immunoglobulins"/>
    <property type="match status" value="1"/>
</dbReference>
<dbReference type="Gene3D" id="3.10.100.10">
    <property type="entry name" value="Mannose-Binding Protein A, subunit A"/>
    <property type="match status" value="5"/>
</dbReference>
<dbReference type="InterPro" id="IPR001304">
    <property type="entry name" value="C-type_lectin-like"/>
</dbReference>
<dbReference type="InterPro" id="IPR016186">
    <property type="entry name" value="C-type_lectin-like/link_sf"/>
</dbReference>
<dbReference type="InterPro" id="IPR018378">
    <property type="entry name" value="C-type_lectin_CS"/>
</dbReference>
<dbReference type="InterPro" id="IPR033987">
    <property type="entry name" value="CSPG_CTLD"/>
</dbReference>
<dbReference type="InterPro" id="IPR016187">
    <property type="entry name" value="CTDL_fold"/>
</dbReference>
<dbReference type="InterPro" id="IPR050691">
    <property type="entry name" value="Hyaluronan_bind_Proteoglycan"/>
</dbReference>
<dbReference type="InterPro" id="IPR007110">
    <property type="entry name" value="Ig-like_dom"/>
</dbReference>
<dbReference type="InterPro" id="IPR036179">
    <property type="entry name" value="Ig-like_dom_sf"/>
</dbReference>
<dbReference type="InterPro" id="IPR013783">
    <property type="entry name" value="Ig-like_fold"/>
</dbReference>
<dbReference type="InterPro" id="IPR003006">
    <property type="entry name" value="Ig/MHC_CS"/>
</dbReference>
<dbReference type="InterPro" id="IPR003599">
    <property type="entry name" value="Ig_sub"/>
</dbReference>
<dbReference type="InterPro" id="IPR013106">
    <property type="entry name" value="Ig_V-set"/>
</dbReference>
<dbReference type="InterPro" id="IPR000538">
    <property type="entry name" value="Link_dom"/>
</dbReference>
<dbReference type="InterPro" id="IPR035976">
    <property type="entry name" value="Sushi/SCR/CCP_sf"/>
</dbReference>
<dbReference type="InterPro" id="IPR000436">
    <property type="entry name" value="Sushi_SCR_CCP_dom"/>
</dbReference>
<dbReference type="PANTHER" id="PTHR22804:SF42">
    <property type="entry name" value="AGGRECAN CORE PROTEIN"/>
    <property type="match status" value="1"/>
</dbReference>
<dbReference type="PANTHER" id="PTHR22804">
    <property type="entry name" value="AGGRECAN/VERSICAN PROTEOGLYCAN"/>
    <property type="match status" value="1"/>
</dbReference>
<dbReference type="Pfam" id="PF00059">
    <property type="entry name" value="Lectin_C"/>
    <property type="match status" value="1"/>
</dbReference>
<dbReference type="Pfam" id="PF00084">
    <property type="entry name" value="Sushi"/>
    <property type="match status" value="1"/>
</dbReference>
<dbReference type="Pfam" id="PF07686">
    <property type="entry name" value="V-set"/>
    <property type="match status" value="1"/>
</dbReference>
<dbReference type="Pfam" id="PF00193">
    <property type="entry name" value="Xlink"/>
    <property type="match status" value="4"/>
</dbReference>
<dbReference type="PRINTS" id="PR01265">
    <property type="entry name" value="LINKMODULE"/>
</dbReference>
<dbReference type="SMART" id="SM00032">
    <property type="entry name" value="CCP"/>
    <property type="match status" value="1"/>
</dbReference>
<dbReference type="SMART" id="SM00034">
    <property type="entry name" value="CLECT"/>
    <property type="match status" value="1"/>
</dbReference>
<dbReference type="SMART" id="SM00409">
    <property type="entry name" value="IG"/>
    <property type="match status" value="1"/>
</dbReference>
<dbReference type="SMART" id="SM00406">
    <property type="entry name" value="IGv"/>
    <property type="match status" value="1"/>
</dbReference>
<dbReference type="SMART" id="SM00445">
    <property type="entry name" value="LINK"/>
    <property type="match status" value="4"/>
</dbReference>
<dbReference type="SUPFAM" id="SSF56436">
    <property type="entry name" value="C-type lectin-like"/>
    <property type="match status" value="5"/>
</dbReference>
<dbReference type="SUPFAM" id="SSF57535">
    <property type="entry name" value="Complement control module/SCR domain"/>
    <property type="match status" value="1"/>
</dbReference>
<dbReference type="SUPFAM" id="SSF48726">
    <property type="entry name" value="Immunoglobulin"/>
    <property type="match status" value="1"/>
</dbReference>
<dbReference type="PROSITE" id="PS00615">
    <property type="entry name" value="C_TYPE_LECTIN_1"/>
    <property type="match status" value="1"/>
</dbReference>
<dbReference type="PROSITE" id="PS50041">
    <property type="entry name" value="C_TYPE_LECTIN_2"/>
    <property type="match status" value="1"/>
</dbReference>
<dbReference type="PROSITE" id="PS50835">
    <property type="entry name" value="IG_LIKE"/>
    <property type="match status" value="1"/>
</dbReference>
<dbReference type="PROSITE" id="PS00290">
    <property type="entry name" value="IG_MHC"/>
    <property type="match status" value="1"/>
</dbReference>
<dbReference type="PROSITE" id="PS01241">
    <property type="entry name" value="LINK_1"/>
    <property type="match status" value="4"/>
</dbReference>
<dbReference type="PROSITE" id="PS50963">
    <property type="entry name" value="LINK_2"/>
    <property type="match status" value="4"/>
</dbReference>
<dbReference type="PROSITE" id="PS50923">
    <property type="entry name" value="SUSHI"/>
    <property type="match status" value="1"/>
</dbReference>
<proteinExistence type="evidence at protein level"/>
<keyword id="KW-0002">3D-structure</keyword>
<keyword id="KW-0025">Alternative splicing</keyword>
<keyword id="KW-0903">Direct protein sequencing</keyword>
<keyword id="KW-1015">Disulfide bond</keyword>
<keyword id="KW-0272">Extracellular matrix</keyword>
<keyword id="KW-0325">Glycoprotein</keyword>
<keyword id="KW-0393">Immunoglobulin domain</keyword>
<keyword id="KW-0430">Lectin</keyword>
<keyword id="KW-0479">Metal-binding</keyword>
<keyword id="KW-0654">Proteoglycan</keyword>
<keyword id="KW-1185">Reference proteome</keyword>
<keyword id="KW-0677">Repeat</keyword>
<keyword id="KW-0964">Secreted</keyword>
<keyword id="KW-0732">Signal</keyword>
<keyword id="KW-0768">Sushi</keyword>
<accession>P07897</accession>
<sequence length="2124" mass="221118">MTTLLLVFVTLRVIAAVISEEVPDHDNSLSVSIPQPSPLKALLGTSLTIPCYFIDPMHPVTTAPSTAPLTPRIKWSRVSKEKEVVLLVATEGQVRVNSIYQDKVSLPNYPAIPSDATLEIQNLRSNDSGIYRCEVMHGIEDSEATLEVIVKGIVFHYRAISTRYTLDFDRAQRACLQNSAIIATPEQLQAAYEDGFHQCDAGWLADQTVRYPIHTPREGCYGDKDEFPGVRTYGIRDTNETYDVYCFAEEMEGEVFYATSPEKFTFQEAANECRTVGARLATTGQLYLAWQGGMDMCSAGWLADRSVRYPISKARPNCGGNLLGVRTVYLHANQTGYPDPSSRYDAICYTGEDFVDIPENFFGVGGEEDITIQTVTWPDLELPLPRNITEGEARGNVILTAKPIFDMSPTVSEPGEALTLAPEVGTTVFPEAGERTEKTTRPWGFPEEATRGPDSATAFASEDLVVRVTISPGAVEVPGQPRLPGGVVFHYRPGSTRYSLTFEEAQQACIRTGAAIASPEQLQAAYEAGYEQCDAGWLQDQTVRYPIVSPRTPCVGDKDSSPGVRTYGVRPSSETYDVYCYVDKLEGEVFFATQMEQFTFQEAQAFCAAQNATLASTGQLYAAWSQGLDKCYAGWLADGTLRYPIVNPRPACGGDKPGVRTVYLYPNQTGLPDPLSKHHAFCFRGVSVVPSPGGTPTSPSDIEDWIVTRVEPGVDAVPLEPETTEVPYFTTEPEKQTEWEPAYTPVGTSPLPGIPPTWLPTVPAAEEHTESPSASQEPSASQVPSTSEEPYTPSLAVPSGTELPSSGDTSGAPDLSGDFTGSTDTSGRLDSSGEPSGGSESGLPSGDLDSSGLGPTVSSGLPVESGSASGDGEIPWSSTPTVDRLPSGGESLEGSASASGTGDLSGLPSGGEITETSASGTEEISGLPSGGDDLETSTSGIDGASVLPTGRGGLETSASGVEDLSGLPSGEEGSETSTSGIEDISVLPTGESPETSASGVGDLSGLPSGGESLETSASGVEDVTQLPTERGGLETSASGIEDITVLPTGRENLETSASGVEDVSGLPSGKEGLETSASGIEDISVFPTEAEGLETSASGGYVSGIPSGEDGTETSTSGVEGVSGLPSGGEGLETSASGVEDLGLPTRDSLETSASGVDVTGYPSGREDTETSVPGVGDDLSGLPSGQEGLETSASGAEDLGGLPSGKEDLVGSASGALDFGKLPSGTLGSGQTPEASGLPSGFSGEYSGVDIGSGPSSGLPDFSGLPSGFPTVSLVDSTLVEVITATTASELEGRGTISVSGSGEESGPPLSELDSSADISGLPSGTELSGQTSGSLDVSGETSGFFDVSGQPFGSSGTGEGTSGIPEVSGQAVRSPDTTEISELSGLSSGQPDVSGEGSGILFGSGQSSGITSVSGETSGISDLSGQPSGFPVLSGTTPGTPDLASGAMSGSGDSSGITFVDTSLIEVTPTTFREEEGLGSVELSGLPSGETDLSGTSGMVDVSGQSSGAIDSSGLISPTPEFSGLPSGVAEVSGEVSGVETGSSLSSGAFDGSGLVSGFPTVSLVDRTLVESITLAPTAQEAGEGPSSILEFSGAHSGTPDISGDLSGSLDQSTWQPGWTEASTEPPSSPYFSGDFSSTTDASGESITAPTGSGETSGLPEVTLITSELVEGVTEPTVSQELGHGPSMTYTPRLFEASGEASASGDLGGPVTIFPGSGVEASVPEGSSDPSAYPEAGVGVSAAPEASSQLSEFPDLHGITSASRETDLEMTTPGTEVSSNPWTFQEGTREGSAAPEVSGESSTTSDIDAGTSGVPFATPMTSGDRTEISGEWSDHTSEVNVTVSTTVPESRWAQSTQHPTETLQEIGSPNPSYSGEETQTAETAKSLTDTPTLASPEGSGETESTAADQEQCEEGWTKFQGHCYRHFPDRETWVDAERRCREQQSHLSSIVTPEEQEFVNKNAQDYQWIGLNDRTIEGDFRWSDGHSLQFEKWRPNQPDNFFATGEDCVVMIWHERGEWNDVPCNYQLPFTCKKGTVACGEPPAVEHARTLGQKKDRYEISSLVRYQCTEGFVQRHVPTIRCQPSADWEEPRITCTDPNTYKHRLQKRTMRPTRRSRPSMAH</sequence>
<protein>
    <recommendedName>
        <fullName>Aggrecan core protein</fullName>
    </recommendedName>
    <alternativeName>
        <fullName>Cartilage-specific proteoglycan core protein</fullName>
        <shortName>CSPCP</shortName>
    </alternativeName>
</protein>